<reference key="1">
    <citation type="journal article" date="2001" name="Curr. Microbiol.">
        <title>Cloning, characterization, and functional expression in Escherichia coli of argH encoding argininosuccinate lyase in the cyanobacterium Nostoc sp. strain PCC 73102.</title>
        <authorList>
            <person name="Troshina O."/>
            <person name="Hansel A."/>
            <person name="Lindblad P."/>
        </authorList>
    </citation>
    <scope>NUCLEOTIDE SEQUENCE [GENOMIC DNA]</scope>
    <scope>CATALYTIC ACTIVITY</scope>
    <scope>PATHWAY</scope>
    <scope>SUBUNIT</scope>
    <source>
        <strain>ATCC 29133 / PCC 73102</strain>
    </source>
</reference>
<reference key="2">
    <citation type="journal article" date="2013" name="Plant Physiol.">
        <title>A Nostoc punctiforme Sugar Transporter Necessary to Establish a Cyanobacterium-Plant Symbiosis.</title>
        <authorList>
            <person name="Ekman M."/>
            <person name="Picossi S."/>
            <person name="Campbell E.L."/>
            <person name="Meeks J.C."/>
            <person name="Flores E."/>
        </authorList>
    </citation>
    <scope>NUCLEOTIDE SEQUENCE [LARGE SCALE GENOMIC DNA]</scope>
    <source>
        <strain>ATCC 29133 / PCC 73102</strain>
    </source>
</reference>
<keyword id="KW-0028">Amino-acid biosynthesis</keyword>
<keyword id="KW-0055">Arginine biosynthesis</keyword>
<keyword id="KW-0963">Cytoplasm</keyword>
<keyword id="KW-0456">Lyase</keyword>
<keyword id="KW-1185">Reference proteome</keyword>
<sequence length="461" mass="51415">MTKEQTWSQRFESALHPAIARFNASIGFDIELIEYDLTGSQAHAKMLAHTGIISSEEGEQLVAGLEQIRQEHRQGKFHPGVDAEDVHFAVEKRLTEIVGDVGKKLHTARSRNDQVGTDTRLYLRDQIQQIKSELREFQGVLLDIAEKHVETLIPGYTHLQRAQPVSLAHHLLAYFQMAQRDWERLGDVSRRVNISPLGCGALAGTTFPIDRHYTAKLLDFDNIYANSLDGVSDRDFAIEFLCAASLIMVHLSRLAEEVILWSSEEFRFVILKDSCATGSSIMPQKKNPDVPELVRGKTGRVFGHLQAMLVIMKGLPLAYNKDLQEDKEGLFDSVNTVKASLEAMTILLREGLEFRTQRLAQAVTEDFSNATDVADYLAARGVPFREAYNLVGKVVKTSIAAGKLLKDLELEEWQQLHPAFAADIYEAISPRQVVAARNSHGGTGFVQVSKALIAARAQIDQ</sequence>
<proteinExistence type="evidence at protein level"/>
<organism>
    <name type="scientific">Nostoc punctiforme (strain ATCC 29133 / PCC 73102)</name>
    <dbReference type="NCBI Taxonomy" id="63737"/>
    <lineage>
        <taxon>Bacteria</taxon>
        <taxon>Bacillati</taxon>
        <taxon>Cyanobacteriota</taxon>
        <taxon>Cyanophyceae</taxon>
        <taxon>Nostocales</taxon>
        <taxon>Nostocaceae</taxon>
        <taxon>Nostoc</taxon>
    </lineage>
</organism>
<protein>
    <recommendedName>
        <fullName evidence="1 3">Argininosuccinate lyase</fullName>
        <shortName evidence="1">ASAL</shortName>
        <shortName evidence="3">ASL</shortName>
        <ecNumber evidence="1 2">4.3.2.1</ecNumber>
    </recommendedName>
    <alternativeName>
        <fullName evidence="1">Arginosuccinase</fullName>
    </alternativeName>
</protein>
<name>ARLY_NOSP7</name>
<comment type="catalytic activity">
    <reaction evidence="1 2">
        <text>2-(N(omega)-L-arginino)succinate = fumarate + L-arginine</text>
        <dbReference type="Rhea" id="RHEA:24020"/>
        <dbReference type="ChEBI" id="CHEBI:29806"/>
        <dbReference type="ChEBI" id="CHEBI:32682"/>
        <dbReference type="ChEBI" id="CHEBI:57472"/>
        <dbReference type="EC" id="4.3.2.1"/>
    </reaction>
</comment>
<comment type="pathway">
    <text evidence="1 2">Amino-acid biosynthesis; L-arginine biosynthesis; L-arginine from L-ornithine and carbamoyl phosphate: step 3/3.</text>
</comment>
<comment type="subunit">
    <text evidence="2">Homotetramer.</text>
</comment>
<comment type="subcellular location">
    <subcellularLocation>
        <location evidence="1">Cytoplasm</location>
    </subcellularLocation>
</comment>
<comment type="similarity">
    <text evidence="1">Belongs to the lyase 1 family. Argininosuccinate lyase subfamily.</text>
</comment>
<accession>Q9LAE5</accession>
<accession>B2JA54</accession>
<feature type="chain" id="PRO_0000137798" description="Argininosuccinate lyase">
    <location>
        <begin position="1"/>
        <end position="461"/>
    </location>
</feature>
<feature type="sequence conflict" description="In Ref. 1; AAF66620." evidence="4" ref="1">
    <original>K</original>
    <variation>R</variation>
    <location>
        <position position="92"/>
    </location>
</feature>
<feature type="sequence conflict" description="In Ref. 1; AAF66620." evidence="4" ref="1">
    <original>D</original>
    <variation>N</variation>
    <location>
        <position position="366"/>
    </location>
</feature>
<dbReference type="EC" id="4.3.2.1" evidence="1 2"/>
<dbReference type="EMBL" id="AF143209">
    <property type="protein sequence ID" value="AAF66620.1"/>
    <property type="molecule type" value="Genomic_DNA"/>
</dbReference>
<dbReference type="EMBL" id="CP001037">
    <property type="protein sequence ID" value="ACC84129.1"/>
    <property type="molecule type" value="Genomic_DNA"/>
</dbReference>
<dbReference type="RefSeq" id="WP_012412072.1">
    <property type="nucleotide sequence ID" value="NC_010628.1"/>
</dbReference>
<dbReference type="SMR" id="Q9LAE5"/>
<dbReference type="STRING" id="63737.Npun_F5831"/>
<dbReference type="EnsemblBacteria" id="ACC84129">
    <property type="protein sequence ID" value="ACC84129"/>
    <property type="gene ID" value="Npun_F5831"/>
</dbReference>
<dbReference type="KEGG" id="npu:Npun_F5831"/>
<dbReference type="eggNOG" id="COG0165">
    <property type="taxonomic scope" value="Bacteria"/>
</dbReference>
<dbReference type="HOGENOM" id="CLU_027272_2_3_3"/>
<dbReference type="OrthoDB" id="9769623at2"/>
<dbReference type="PhylomeDB" id="Q9LAE5"/>
<dbReference type="BRENDA" id="4.3.2.1">
    <property type="organism ID" value="4371"/>
</dbReference>
<dbReference type="UniPathway" id="UPA00068">
    <property type="reaction ID" value="UER00114"/>
</dbReference>
<dbReference type="Proteomes" id="UP000001191">
    <property type="component" value="Chromosome"/>
</dbReference>
<dbReference type="GO" id="GO:0005829">
    <property type="term" value="C:cytosol"/>
    <property type="evidence" value="ECO:0007669"/>
    <property type="project" value="TreeGrafter"/>
</dbReference>
<dbReference type="GO" id="GO:0004056">
    <property type="term" value="F:argininosuccinate lyase activity"/>
    <property type="evidence" value="ECO:0007669"/>
    <property type="project" value="UniProtKB-UniRule"/>
</dbReference>
<dbReference type="GO" id="GO:0042450">
    <property type="term" value="P:arginine biosynthetic process via ornithine"/>
    <property type="evidence" value="ECO:0007669"/>
    <property type="project" value="InterPro"/>
</dbReference>
<dbReference type="GO" id="GO:0006526">
    <property type="term" value="P:L-arginine biosynthetic process"/>
    <property type="evidence" value="ECO:0007669"/>
    <property type="project" value="UniProtKB-UniRule"/>
</dbReference>
<dbReference type="CDD" id="cd01359">
    <property type="entry name" value="Argininosuccinate_lyase"/>
    <property type="match status" value="1"/>
</dbReference>
<dbReference type="FunFam" id="1.10.275.10:FF:000002">
    <property type="entry name" value="Argininosuccinate lyase"/>
    <property type="match status" value="1"/>
</dbReference>
<dbReference type="FunFam" id="1.10.40.30:FF:000001">
    <property type="entry name" value="Argininosuccinate lyase"/>
    <property type="match status" value="1"/>
</dbReference>
<dbReference type="FunFam" id="1.20.200.10:FF:000015">
    <property type="entry name" value="argininosuccinate lyase isoform X2"/>
    <property type="match status" value="1"/>
</dbReference>
<dbReference type="Gene3D" id="1.10.40.30">
    <property type="entry name" value="Fumarase/aspartase (C-terminal domain)"/>
    <property type="match status" value="1"/>
</dbReference>
<dbReference type="Gene3D" id="1.20.200.10">
    <property type="entry name" value="Fumarase/aspartase (Central domain)"/>
    <property type="match status" value="1"/>
</dbReference>
<dbReference type="Gene3D" id="1.10.275.10">
    <property type="entry name" value="Fumarase/aspartase (N-terminal domain)"/>
    <property type="match status" value="1"/>
</dbReference>
<dbReference type="HAMAP" id="MF_00006">
    <property type="entry name" value="Arg_succ_lyase"/>
    <property type="match status" value="1"/>
</dbReference>
<dbReference type="InterPro" id="IPR029419">
    <property type="entry name" value="Arg_succ_lyase_C"/>
</dbReference>
<dbReference type="InterPro" id="IPR009049">
    <property type="entry name" value="Argininosuccinate_lyase"/>
</dbReference>
<dbReference type="InterPro" id="IPR024083">
    <property type="entry name" value="Fumarase/histidase_N"/>
</dbReference>
<dbReference type="InterPro" id="IPR020557">
    <property type="entry name" value="Fumarate_lyase_CS"/>
</dbReference>
<dbReference type="InterPro" id="IPR000362">
    <property type="entry name" value="Fumarate_lyase_fam"/>
</dbReference>
<dbReference type="InterPro" id="IPR022761">
    <property type="entry name" value="Fumarate_lyase_N"/>
</dbReference>
<dbReference type="InterPro" id="IPR008948">
    <property type="entry name" value="L-Aspartase-like"/>
</dbReference>
<dbReference type="NCBIfam" id="TIGR00838">
    <property type="entry name" value="argH"/>
    <property type="match status" value="1"/>
</dbReference>
<dbReference type="PANTHER" id="PTHR43814">
    <property type="entry name" value="ARGININOSUCCINATE LYASE"/>
    <property type="match status" value="1"/>
</dbReference>
<dbReference type="PANTHER" id="PTHR43814:SF1">
    <property type="entry name" value="ARGININOSUCCINATE LYASE"/>
    <property type="match status" value="1"/>
</dbReference>
<dbReference type="Pfam" id="PF14698">
    <property type="entry name" value="ASL_C2"/>
    <property type="match status" value="1"/>
</dbReference>
<dbReference type="Pfam" id="PF00206">
    <property type="entry name" value="Lyase_1"/>
    <property type="match status" value="1"/>
</dbReference>
<dbReference type="PRINTS" id="PR00145">
    <property type="entry name" value="ARGSUCLYASE"/>
</dbReference>
<dbReference type="PRINTS" id="PR00149">
    <property type="entry name" value="FUMRATELYASE"/>
</dbReference>
<dbReference type="SUPFAM" id="SSF48557">
    <property type="entry name" value="L-aspartase-like"/>
    <property type="match status" value="1"/>
</dbReference>
<dbReference type="PROSITE" id="PS00163">
    <property type="entry name" value="FUMARATE_LYASES"/>
    <property type="match status" value="1"/>
</dbReference>
<gene>
    <name evidence="1 3" type="primary">argH</name>
    <name type="ordered locus">Npun_F5831</name>
</gene>
<evidence type="ECO:0000255" key="1">
    <source>
        <dbReference type="HAMAP-Rule" id="MF_00006"/>
    </source>
</evidence>
<evidence type="ECO:0000269" key="2">
    <source>
    </source>
</evidence>
<evidence type="ECO:0000303" key="3">
    <source>
    </source>
</evidence>
<evidence type="ECO:0000305" key="4"/>